<proteinExistence type="evidence at protein level"/>
<feature type="transit peptide" description="Chloroplast" evidence="3">
    <location>
        <begin position="1"/>
        <end position="48"/>
    </location>
</feature>
<feature type="chain" id="PRO_0000454405" description="(-)-beta-phellandrene synthase 2, chloroplastic">
    <location>
        <begin position="49"/>
        <end position="624"/>
    </location>
</feature>
<feature type="short sequence motif" description="DDXXD motif" evidence="1">
    <location>
        <begin position="375"/>
        <end position="379"/>
    </location>
</feature>
<feature type="binding site" evidence="2">
    <location>
        <position position="375"/>
    </location>
    <ligand>
        <name>Mg(2+)</name>
        <dbReference type="ChEBI" id="CHEBI:18420"/>
        <label>1</label>
    </ligand>
</feature>
<feature type="binding site" evidence="2">
    <location>
        <position position="375"/>
    </location>
    <ligand>
        <name>Mg(2+)</name>
        <dbReference type="ChEBI" id="CHEBI:18420"/>
        <label>2</label>
    </ligand>
</feature>
<feature type="binding site" evidence="2">
    <location>
        <position position="379"/>
    </location>
    <ligand>
        <name>Mg(2+)</name>
        <dbReference type="ChEBI" id="CHEBI:18420"/>
        <label>1</label>
    </ligand>
</feature>
<feature type="binding site" evidence="2">
    <location>
        <position position="379"/>
    </location>
    <ligand>
        <name>Mg(2+)</name>
        <dbReference type="ChEBI" id="CHEBI:18420"/>
        <label>2</label>
    </ligand>
</feature>
<feature type="binding site" evidence="2">
    <location>
        <position position="527"/>
    </location>
    <ligand>
        <name>Mg(2+)</name>
        <dbReference type="ChEBI" id="CHEBI:18420"/>
        <label>3</label>
    </ligand>
</feature>
<accession>C0PTH8</accession>
<gene>
    <name evidence="5" type="primary">TPS-Phel-2</name>
</gene>
<name>BPHS2_PICSI</name>
<keyword id="KW-0150">Chloroplast</keyword>
<keyword id="KW-0456">Lyase</keyword>
<keyword id="KW-0460">Magnesium</keyword>
<keyword id="KW-0479">Metal-binding</keyword>
<keyword id="KW-0934">Plastid</keyword>
<keyword id="KW-0809">Transit peptide</keyword>
<sequence length="624" mass="71427">MAIVSSVPLASKSCLHKSLISSIHKLKPFCRTIPTLGMSRPGKYVMPSMSMSSPVSDDGVQRRTGGYHSNLWNDDIIQFLSTTYGEPAYRERGERLIDEVKNMFNSISMEDVEFSPLNDLIQRLWIVDSVERLGIDRHFKNEIKSTLDYVYSYWTQKGIGCGIESVVPDLNSTALGLRTLRLHGYPVSAEVLKHFQNQNGQFACSPSETEGEMRSIVNLYRASLIAFPGEKVMEEAEIFSTKYLKEALQKIPVSSLSREIGDVLEQDWHTNLPRLEARNYIDVFGQDTKDTKLYMKTEKLLELAKLEFNIFQSLQKTELDSLLRWWKDSGFHHITFSRHLHVEYYTLASCIAIEPQHSRFRLGFAKACHVITILDDMYDVFGTIDELELFTAQIKRWDPSATDCLPKYMKRMYMILYDMVNEMSREAETAQGRDTLNYARQAWEDFIDSYMQEAKWIATGYLPTFDEYFENGKVSSGHRVAALQPILTMDIPFPHDILKEVDFPSKLNDLASAILRLRGDTRCYKADRARGEEASCISCYMKDNPGATEEDALSHINAVISDVIKGLNWELLNPNSSVPISSKKHVFDVSRALHYGYKYRDGYSVSNIETKSLVMRTLLESVPF</sequence>
<evidence type="ECO:0000250" key="1">
    <source>
        <dbReference type="UniProtKB" id="A0A1C9J6A7"/>
    </source>
</evidence>
<evidence type="ECO:0000250" key="2">
    <source>
        <dbReference type="UniProtKB" id="Q40577"/>
    </source>
</evidence>
<evidence type="ECO:0000255" key="3"/>
<evidence type="ECO:0000269" key="4">
    <source>
    </source>
</evidence>
<evidence type="ECO:0000303" key="5">
    <source>
    </source>
</evidence>
<evidence type="ECO:0000305" key="6"/>
<comment type="function">
    <text evidence="4">Terpene synthase (TPS) involved in the biosynthesis of monoterpene natural products included in conifer oleoresin secretions and volatile emissions; these compounds contribute to biotic and abiotic stress defense against herbivores and pathogens (PubMed:21385377). Catalyzes the conversion of (2E)-geranyl diphosphate (GPP) to (-)-beta-phellandrene (PubMed:21385377).</text>
</comment>
<comment type="catalytic activity">
    <reaction evidence="4">
        <text>(2E)-geranyl diphosphate = (-)-beta-phellandrene + diphosphate</text>
        <dbReference type="Rhea" id="RHEA:25492"/>
        <dbReference type="ChEBI" id="CHEBI:129"/>
        <dbReference type="ChEBI" id="CHEBI:33019"/>
        <dbReference type="ChEBI" id="CHEBI:58057"/>
        <dbReference type="EC" id="4.2.3.52"/>
    </reaction>
</comment>
<comment type="cofactor">
    <cofactor evidence="1">
        <name>Mg(2+)</name>
        <dbReference type="ChEBI" id="CHEBI:18420"/>
    </cofactor>
    <cofactor evidence="1">
        <name>Mn(2+)</name>
        <dbReference type="ChEBI" id="CHEBI:29035"/>
    </cofactor>
    <text evidence="1">Binds 3 Mg(2+) or Mn(2+) ions per subunit.</text>
</comment>
<comment type="pathway">
    <text evidence="4">Terpene metabolism; oleoresin biosynthesis.</text>
</comment>
<comment type="subcellular location">
    <subcellularLocation>
        <location evidence="3">Plastid</location>
        <location evidence="3">Chloroplast</location>
    </subcellularLocation>
</comment>
<comment type="domain">
    <text evidence="1">The Asp-Asp-Xaa-Xaa-Asp/Glu (DDXXD/E) motif is important for the catalytic activity, presumably through binding to Mg(2+).</text>
</comment>
<comment type="similarity">
    <text evidence="6">Belongs to the terpene synthase family. Tpsd subfamily.</text>
</comment>
<protein>
    <recommendedName>
        <fullName evidence="5">(-)-beta-phellandrene synthase 2, chloroplastic</fullName>
        <ecNumber evidence="4">4.2.3.52</ecNumber>
    </recommendedName>
    <alternativeName>
        <fullName evidence="5">Terpene synthase TPS-Phel-2</fullName>
        <shortName evidence="5">PsTPS-Phel-2</shortName>
    </alternativeName>
</protein>
<organism>
    <name type="scientific">Picea sitchensis</name>
    <name type="common">Sitka spruce</name>
    <name type="synonym">Pinus sitchensis</name>
    <dbReference type="NCBI Taxonomy" id="3332"/>
    <lineage>
        <taxon>Eukaryota</taxon>
        <taxon>Viridiplantae</taxon>
        <taxon>Streptophyta</taxon>
        <taxon>Embryophyta</taxon>
        <taxon>Tracheophyta</taxon>
        <taxon>Spermatophyta</taxon>
        <taxon>Pinopsida</taxon>
        <taxon>Pinidae</taxon>
        <taxon>Conifers I</taxon>
        <taxon>Pinales</taxon>
        <taxon>Pinaceae</taxon>
        <taxon>Picea</taxon>
    </lineage>
</organism>
<reference key="1">
    <citation type="journal article" date="2008" name="BMC Genomics">
        <title>A conifer genomics resource of 200,000 spruce (Picea spp.) ESTs and 6,464 high-quality, sequence-finished full-length cDNAs for Sitka spruce (Picea sitchensis).</title>
        <authorList>
            <person name="Ralph S.G."/>
            <person name="Chun H.J.E."/>
            <person name="Kolosova N."/>
            <person name="Cooper D."/>
            <person name="Oddy C."/>
            <person name="Ritland C.E."/>
            <person name="Kirkpatrick R."/>
            <person name="Moore R."/>
            <person name="Barber S."/>
            <person name="Holt R.A."/>
            <person name="Jones S.J.M."/>
            <person name="Marra M.A."/>
            <person name="Douglas C.J."/>
            <person name="Ritland K."/>
            <person name="Bohlmann J."/>
        </authorList>
    </citation>
    <scope>NUCLEOTIDE SEQUENCE [MRNA]</scope>
    <source>
        <strain>cv. FB3-425</strain>
        <tissue>Bark</tissue>
    </source>
</reference>
<reference key="2">
    <citation type="journal article" date="2011" name="BMC Plant Biol.">
        <title>Transcriptome mining, functional characterization, and phylogeny of a large terpene synthase gene family in spruce (Picea spp.).</title>
        <authorList>
            <person name="Keeling C.I."/>
            <person name="Weisshaar S."/>
            <person name="Ralph S.G."/>
            <person name="Jancsik S."/>
            <person name="Hamberger B."/>
            <person name="Dullat H.K."/>
            <person name="Bohlmann J."/>
        </authorList>
    </citation>
    <scope>NUCLEOTIDE SEQUENCE [MRNA]</scope>
    <scope>CATALYTIC ACTIVITY</scope>
    <scope>FUNCTION</scope>
    <scope>PATHWAY</scope>
    <scope>GENE FAMILY</scope>
    <source>
        <strain>cv. FB3-425</strain>
    </source>
</reference>
<dbReference type="EC" id="4.2.3.52" evidence="4"/>
<dbReference type="EMBL" id="BT071667">
    <property type="protein sequence ID" value="ACN41118.1"/>
    <property type="molecule type" value="mRNA"/>
</dbReference>
<dbReference type="EMBL" id="HQ426169">
    <property type="protein sequence ID" value="ADZ45506.1"/>
    <property type="molecule type" value="mRNA"/>
</dbReference>
<dbReference type="SMR" id="C0PTH8"/>
<dbReference type="BRENDA" id="4.2.3.52">
    <property type="organism ID" value="8974"/>
</dbReference>
<dbReference type="UniPathway" id="UPA00924"/>
<dbReference type="GO" id="GO:0009507">
    <property type="term" value="C:chloroplast"/>
    <property type="evidence" value="ECO:0007669"/>
    <property type="project" value="UniProtKB-SubCell"/>
</dbReference>
<dbReference type="GO" id="GO:0016829">
    <property type="term" value="F:lyase activity"/>
    <property type="evidence" value="ECO:0000314"/>
    <property type="project" value="UniProtKB"/>
</dbReference>
<dbReference type="GO" id="GO:0000287">
    <property type="term" value="F:magnesium ion binding"/>
    <property type="evidence" value="ECO:0007669"/>
    <property type="project" value="InterPro"/>
</dbReference>
<dbReference type="GO" id="GO:0010333">
    <property type="term" value="F:terpene synthase activity"/>
    <property type="evidence" value="ECO:0007669"/>
    <property type="project" value="InterPro"/>
</dbReference>
<dbReference type="GO" id="GO:0016102">
    <property type="term" value="P:diterpenoid biosynthetic process"/>
    <property type="evidence" value="ECO:0007669"/>
    <property type="project" value="InterPro"/>
</dbReference>
<dbReference type="GO" id="GO:0010597">
    <property type="term" value="P:green leaf volatile biosynthetic process"/>
    <property type="evidence" value="ECO:0000314"/>
    <property type="project" value="UniProtKB"/>
</dbReference>
<dbReference type="GO" id="GO:0016099">
    <property type="term" value="P:monoterpenoid biosynthetic process"/>
    <property type="evidence" value="ECO:0000314"/>
    <property type="project" value="UniProtKB"/>
</dbReference>
<dbReference type="CDD" id="cd00684">
    <property type="entry name" value="Terpene_cyclase_plant_C1"/>
    <property type="match status" value="1"/>
</dbReference>
<dbReference type="FunFam" id="1.50.10.130:FF:000004">
    <property type="entry name" value="Carene synthase, chloroplastic"/>
    <property type="match status" value="1"/>
</dbReference>
<dbReference type="FunFam" id="1.10.600.10:FF:000005">
    <property type="entry name" value="Ent-kaur-16-ene synthase, chloroplastic"/>
    <property type="match status" value="1"/>
</dbReference>
<dbReference type="Gene3D" id="1.10.600.10">
    <property type="entry name" value="Farnesyl Diphosphate Synthase"/>
    <property type="match status" value="1"/>
</dbReference>
<dbReference type="Gene3D" id="1.50.10.130">
    <property type="entry name" value="Terpene synthase, N-terminal domain"/>
    <property type="match status" value="1"/>
</dbReference>
<dbReference type="InterPro" id="IPR008949">
    <property type="entry name" value="Isoprenoid_synthase_dom_sf"/>
</dbReference>
<dbReference type="InterPro" id="IPR034741">
    <property type="entry name" value="Terpene_cyclase-like_1_C"/>
</dbReference>
<dbReference type="InterPro" id="IPR044814">
    <property type="entry name" value="Terpene_cyclase_plant_C1"/>
</dbReference>
<dbReference type="InterPro" id="IPR001906">
    <property type="entry name" value="Terpene_synth_N"/>
</dbReference>
<dbReference type="InterPro" id="IPR036965">
    <property type="entry name" value="Terpene_synth_N_sf"/>
</dbReference>
<dbReference type="InterPro" id="IPR050148">
    <property type="entry name" value="Terpene_synthase-like"/>
</dbReference>
<dbReference type="InterPro" id="IPR005630">
    <property type="entry name" value="Terpene_synthase_metal-bd"/>
</dbReference>
<dbReference type="InterPro" id="IPR008930">
    <property type="entry name" value="Terpenoid_cyclase/PrenylTrfase"/>
</dbReference>
<dbReference type="PANTHER" id="PTHR31225">
    <property type="entry name" value="OS04G0344100 PROTEIN-RELATED"/>
    <property type="match status" value="1"/>
</dbReference>
<dbReference type="Pfam" id="PF01397">
    <property type="entry name" value="Terpene_synth"/>
    <property type="match status" value="1"/>
</dbReference>
<dbReference type="Pfam" id="PF03936">
    <property type="entry name" value="Terpene_synth_C"/>
    <property type="match status" value="1"/>
</dbReference>
<dbReference type="SFLD" id="SFLDS00005">
    <property type="entry name" value="Isoprenoid_Synthase_Type_I"/>
    <property type="match status" value="1"/>
</dbReference>
<dbReference type="SFLD" id="SFLDG01019">
    <property type="entry name" value="Terpene_Cyclase_Like_1_C_Termi"/>
    <property type="match status" value="1"/>
</dbReference>
<dbReference type="SFLD" id="SFLDG01014">
    <property type="entry name" value="Terpene_Cyclase_Like_1_N-term"/>
    <property type="match status" value="1"/>
</dbReference>
<dbReference type="SUPFAM" id="SSF48239">
    <property type="entry name" value="Terpenoid cyclases/Protein prenyltransferases"/>
    <property type="match status" value="1"/>
</dbReference>
<dbReference type="SUPFAM" id="SSF48576">
    <property type="entry name" value="Terpenoid synthases"/>
    <property type="match status" value="1"/>
</dbReference>